<feature type="chain" id="PRO_1000090220" description="Cobyric acid synthase">
    <location>
        <begin position="1"/>
        <end position="484"/>
    </location>
</feature>
<feature type="domain" description="GATase cobBQ-type" evidence="1">
    <location>
        <begin position="246"/>
        <end position="437"/>
    </location>
</feature>
<feature type="active site" description="Nucleophile" evidence="1">
    <location>
        <position position="327"/>
    </location>
</feature>
<feature type="active site" evidence="1">
    <location>
        <position position="429"/>
    </location>
</feature>
<proteinExistence type="inferred from homology"/>
<name>COBQ_PARP8</name>
<sequence length="484" mass="51489">MIQGTTSDAGKSTLVAGLCRLARRAGVRVAPFKPQNMALNSAVTIDGGEIGRAQALQAVAAGIDAHTDLNPVLLKPTSDRGAQVIIHGKARMNLDARAYHDYKPVAFEAVLASYARLKASYDTIFVEGAGSPAEINLRERDIANMGFAEAVDCPVVLVSDIDRGGVFAHLTGTLACLSDSEQARVRGFVINRFRGDVSLLQPGLDWLEAKTGKPVLGVVPYLHGLTLDAEDMLPRELRAAQASADALRVVVPALPHISNHTDFDALRAHPQVDFHYVRAGSAPPPADLIILPGSKNVQGDLAFLRAQGWDAVLQRHLRYGGRVIGICGGMQMLGREVADPYGVEGPPGTVEGLGWLDFSTTLTRDKTLKNVTGRLATDAGRIAGYEIHMGETQGPALDAPALLLADEMGGVRPDGARSADGQILATYVHGLFDTPAACASLLAWAGLKNADAIDYPALREASLERLADTLAVHLDLKRFWEAIG</sequence>
<dbReference type="EMBL" id="CP001043">
    <property type="protein sequence ID" value="ACC71378.1"/>
    <property type="molecule type" value="Genomic_DNA"/>
</dbReference>
<dbReference type="RefSeq" id="WP_012401584.1">
    <property type="nucleotide sequence ID" value="NC_010622.1"/>
</dbReference>
<dbReference type="SMR" id="B2JER3"/>
<dbReference type="STRING" id="391038.Bphy_2203"/>
<dbReference type="KEGG" id="bph:Bphy_2203"/>
<dbReference type="eggNOG" id="COG1492">
    <property type="taxonomic scope" value="Bacteria"/>
</dbReference>
<dbReference type="HOGENOM" id="CLU_019250_2_2_4"/>
<dbReference type="OrthoDB" id="9808302at2"/>
<dbReference type="UniPathway" id="UPA00148"/>
<dbReference type="Proteomes" id="UP000001192">
    <property type="component" value="Chromosome 1"/>
</dbReference>
<dbReference type="GO" id="GO:0015420">
    <property type="term" value="F:ABC-type vitamin B12 transporter activity"/>
    <property type="evidence" value="ECO:0007669"/>
    <property type="project" value="UniProtKB-UniRule"/>
</dbReference>
<dbReference type="GO" id="GO:0003824">
    <property type="term" value="F:catalytic activity"/>
    <property type="evidence" value="ECO:0007669"/>
    <property type="project" value="InterPro"/>
</dbReference>
<dbReference type="GO" id="GO:0009236">
    <property type="term" value="P:cobalamin biosynthetic process"/>
    <property type="evidence" value="ECO:0007669"/>
    <property type="project" value="UniProtKB-UniRule"/>
</dbReference>
<dbReference type="CDD" id="cd05389">
    <property type="entry name" value="CobQ_N"/>
    <property type="match status" value="1"/>
</dbReference>
<dbReference type="CDD" id="cd01750">
    <property type="entry name" value="GATase1_CobQ"/>
    <property type="match status" value="1"/>
</dbReference>
<dbReference type="Gene3D" id="3.40.50.880">
    <property type="match status" value="1"/>
</dbReference>
<dbReference type="Gene3D" id="3.40.50.300">
    <property type="entry name" value="P-loop containing nucleotide triphosphate hydrolases"/>
    <property type="match status" value="1"/>
</dbReference>
<dbReference type="HAMAP" id="MF_00028">
    <property type="entry name" value="CobQ"/>
    <property type="match status" value="1"/>
</dbReference>
<dbReference type="InterPro" id="IPR029062">
    <property type="entry name" value="Class_I_gatase-like"/>
</dbReference>
<dbReference type="InterPro" id="IPR002586">
    <property type="entry name" value="CobQ/CobB/MinD/ParA_Nub-bd_dom"/>
</dbReference>
<dbReference type="InterPro" id="IPR033949">
    <property type="entry name" value="CobQ_GATase1"/>
</dbReference>
<dbReference type="InterPro" id="IPR047045">
    <property type="entry name" value="CobQ_N"/>
</dbReference>
<dbReference type="InterPro" id="IPR004459">
    <property type="entry name" value="CobQ_synth"/>
</dbReference>
<dbReference type="InterPro" id="IPR011698">
    <property type="entry name" value="GATase_3"/>
</dbReference>
<dbReference type="InterPro" id="IPR027417">
    <property type="entry name" value="P-loop_NTPase"/>
</dbReference>
<dbReference type="NCBIfam" id="TIGR00313">
    <property type="entry name" value="cobQ"/>
    <property type="match status" value="1"/>
</dbReference>
<dbReference type="NCBIfam" id="NF001989">
    <property type="entry name" value="PRK00784.1"/>
    <property type="match status" value="1"/>
</dbReference>
<dbReference type="PANTHER" id="PTHR21343:SF1">
    <property type="entry name" value="COBYRIC ACID SYNTHASE"/>
    <property type="match status" value="1"/>
</dbReference>
<dbReference type="PANTHER" id="PTHR21343">
    <property type="entry name" value="DETHIOBIOTIN SYNTHETASE"/>
    <property type="match status" value="1"/>
</dbReference>
<dbReference type="Pfam" id="PF01656">
    <property type="entry name" value="CbiA"/>
    <property type="match status" value="1"/>
</dbReference>
<dbReference type="Pfam" id="PF07685">
    <property type="entry name" value="GATase_3"/>
    <property type="match status" value="1"/>
</dbReference>
<dbReference type="SUPFAM" id="SSF52317">
    <property type="entry name" value="Class I glutamine amidotransferase-like"/>
    <property type="match status" value="1"/>
</dbReference>
<dbReference type="SUPFAM" id="SSF52540">
    <property type="entry name" value="P-loop containing nucleoside triphosphate hydrolases"/>
    <property type="match status" value="1"/>
</dbReference>
<dbReference type="PROSITE" id="PS51274">
    <property type="entry name" value="GATASE_COBBQ"/>
    <property type="match status" value="1"/>
</dbReference>
<comment type="function">
    <text evidence="1">Catalyzes amidations at positions B, D, E, and G on adenosylcobyrinic A,C-diamide. NH(2) groups are provided by glutamine, and one molecule of ATP is hydrogenolyzed for each amidation.</text>
</comment>
<comment type="pathway">
    <text evidence="1">Cofactor biosynthesis; adenosylcobalamin biosynthesis.</text>
</comment>
<comment type="similarity">
    <text evidence="1">Belongs to the CobB/CobQ family. CobQ subfamily.</text>
</comment>
<accession>B2JER3</accession>
<keyword id="KW-0169">Cobalamin biosynthesis</keyword>
<keyword id="KW-0315">Glutamine amidotransferase</keyword>
<keyword id="KW-1185">Reference proteome</keyword>
<reference key="1">
    <citation type="journal article" date="2014" name="Stand. Genomic Sci.">
        <title>Complete genome sequence of Burkholderia phymatum STM815(T), a broad host range and efficient nitrogen-fixing symbiont of Mimosa species.</title>
        <authorList>
            <person name="Moulin L."/>
            <person name="Klonowska A."/>
            <person name="Caroline B."/>
            <person name="Booth K."/>
            <person name="Vriezen J.A."/>
            <person name="Melkonian R."/>
            <person name="James E.K."/>
            <person name="Young J.P."/>
            <person name="Bena G."/>
            <person name="Hauser L."/>
            <person name="Land M."/>
            <person name="Kyrpides N."/>
            <person name="Bruce D."/>
            <person name="Chain P."/>
            <person name="Copeland A."/>
            <person name="Pitluck S."/>
            <person name="Woyke T."/>
            <person name="Lizotte-Waniewski M."/>
            <person name="Bristow J."/>
            <person name="Riley M."/>
        </authorList>
    </citation>
    <scope>NUCLEOTIDE SEQUENCE [LARGE SCALE GENOMIC DNA]</scope>
    <source>
        <strain>DSM 17167 / CIP 108236 / LMG 21445 / STM815</strain>
    </source>
</reference>
<evidence type="ECO:0000255" key="1">
    <source>
        <dbReference type="HAMAP-Rule" id="MF_00028"/>
    </source>
</evidence>
<organism>
    <name type="scientific">Paraburkholderia phymatum (strain DSM 17167 / CIP 108236 / LMG 21445 / STM815)</name>
    <name type="common">Burkholderia phymatum</name>
    <dbReference type="NCBI Taxonomy" id="391038"/>
    <lineage>
        <taxon>Bacteria</taxon>
        <taxon>Pseudomonadati</taxon>
        <taxon>Pseudomonadota</taxon>
        <taxon>Betaproteobacteria</taxon>
        <taxon>Burkholderiales</taxon>
        <taxon>Burkholderiaceae</taxon>
        <taxon>Paraburkholderia</taxon>
    </lineage>
</organism>
<gene>
    <name evidence="1" type="primary">cobQ</name>
    <name type="ordered locus">Bphy_2203</name>
</gene>
<protein>
    <recommendedName>
        <fullName evidence="1">Cobyric acid synthase</fullName>
    </recommendedName>
</protein>